<feature type="chain" id="PRO_1000074894" description="Serine hydroxymethyltransferase">
    <location>
        <begin position="1"/>
        <end position="415"/>
    </location>
</feature>
<feature type="binding site" evidence="1">
    <location>
        <position position="117"/>
    </location>
    <ligand>
        <name>(6S)-5,6,7,8-tetrahydrofolate</name>
        <dbReference type="ChEBI" id="CHEBI:57453"/>
    </ligand>
</feature>
<feature type="binding site" evidence="1">
    <location>
        <begin position="121"/>
        <end position="123"/>
    </location>
    <ligand>
        <name>(6S)-5,6,7,8-tetrahydrofolate</name>
        <dbReference type="ChEBI" id="CHEBI:57453"/>
    </ligand>
</feature>
<feature type="site" description="Plays an important role in substrate specificity" evidence="1">
    <location>
        <position position="225"/>
    </location>
</feature>
<feature type="modified residue" description="N6-(pyridoxal phosphate)lysine" evidence="1">
    <location>
        <position position="226"/>
    </location>
</feature>
<keyword id="KW-0028">Amino-acid biosynthesis</keyword>
<keyword id="KW-0963">Cytoplasm</keyword>
<keyword id="KW-0554">One-carbon metabolism</keyword>
<keyword id="KW-0663">Pyridoxal phosphate</keyword>
<keyword id="KW-0808">Transferase</keyword>
<dbReference type="EC" id="2.1.2.1" evidence="1"/>
<dbReference type="EMBL" id="CP000688">
    <property type="protein sequence ID" value="ABQ16998.1"/>
    <property type="molecule type" value="Genomic_DNA"/>
</dbReference>
<dbReference type="SMR" id="A5FS31"/>
<dbReference type="KEGG" id="deb:DehaBAV1_0413"/>
<dbReference type="PATRIC" id="fig|216389.18.peg.456"/>
<dbReference type="HOGENOM" id="CLU_022477_2_1_0"/>
<dbReference type="UniPathway" id="UPA00193"/>
<dbReference type="UniPathway" id="UPA00288">
    <property type="reaction ID" value="UER01023"/>
</dbReference>
<dbReference type="GO" id="GO:0005829">
    <property type="term" value="C:cytosol"/>
    <property type="evidence" value="ECO:0007669"/>
    <property type="project" value="TreeGrafter"/>
</dbReference>
<dbReference type="GO" id="GO:0004372">
    <property type="term" value="F:glycine hydroxymethyltransferase activity"/>
    <property type="evidence" value="ECO:0007669"/>
    <property type="project" value="UniProtKB-UniRule"/>
</dbReference>
<dbReference type="GO" id="GO:0030170">
    <property type="term" value="F:pyridoxal phosphate binding"/>
    <property type="evidence" value="ECO:0007669"/>
    <property type="project" value="UniProtKB-UniRule"/>
</dbReference>
<dbReference type="GO" id="GO:0019264">
    <property type="term" value="P:glycine biosynthetic process from serine"/>
    <property type="evidence" value="ECO:0007669"/>
    <property type="project" value="UniProtKB-UniRule"/>
</dbReference>
<dbReference type="GO" id="GO:0035999">
    <property type="term" value="P:tetrahydrofolate interconversion"/>
    <property type="evidence" value="ECO:0007669"/>
    <property type="project" value="UniProtKB-UniRule"/>
</dbReference>
<dbReference type="CDD" id="cd00378">
    <property type="entry name" value="SHMT"/>
    <property type="match status" value="1"/>
</dbReference>
<dbReference type="FunFam" id="3.40.640.10:FF:000001">
    <property type="entry name" value="Serine hydroxymethyltransferase"/>
    <property type="match status" value="1"/>
</dbReference>
<dbReference type="Gene3D" id="3.90.1150.10">
    <property type="entry name" value="Aspartate Aminotransferase, domain 1"/>
    <property type="match status" value="1"/>
</dbReference>
<dbReference type="Gene3D" id="3.40.640.10">
    <property type="entry name" value="Type I PLP-dependent aspartate aminotransferase-like (Major domain)"/>
    <property type="match status" value="1"/>
</dbReference>
<dbReference type="HAMAP" id="MF_00051">
    <property type="entry name" value="SHMT"/>
    <property type="match status" value="1"/>
</dbReference>
<dbReference type="InterPro" id="IPR015424">
    <property type="entry name" value="PyrdxlP-dep_Trfase"/>
</dbReference>
<dbReference type="InterPro" id="IPR015421">
    <property type="entry name" value="PyrdxlP-dep_Trfase_major"/>
</dbReference>
<dbReference type="InterPro" id="IPR015422">
    <property type="entry name" value="PyrdxlP-dep_Trfase_small"/>
</dbReference>
<dbReference type="InterPro" id="IPR001085">
    <property type="entry name" value="Ser_HO-MeTrfase"/>
</dbReference>
<dbReference type="InterPro" id="IPR049943">
    <property type="entry name" value="Ser_HO-MeTrfase-like"/>
</dbReference>
<dbReference type="InterPro" id="IPR019798">
    <property type="entry name" value="Ser_HO-MeTrfase_PLP_BS"/>
</dbReference>
<dbReference type="InterPro" id="IPR039429">
    <property type="entry name" value="SHMT-like_dom"/>
</dbReference>
<dbReference type="NCBIfam" id="NF000586">
    <property type="entry name" value="PRK00011.1"/>
    <property type="match status" value="1"/>
</dbReference>
<dbReference type="PANTHER" id="PTHR11680">
    <property type="entry name" value="SERINE HYDROXYMETHYLTRANSFERASE"/>
    <property type="match status" value="1"/>
</dbReference>
<dbReference type="PANTHER" id="PTHR11680:SF35">
    <property type="entry name" value="SERINE HYDROXYMETHYLTRANSFERASE 1"/>
    <property type="match status" value="1"/>
</dbReference>
<dbReference type="Pfam" id="PF00464">
    <property type="entry name" value="SHMT"/>
    <property type="match status" value="1"/>
</dbReference>
<dbReference type="PIRSF" id="PIRSF000412">
    <property type="entry name" value="SHMT"/>
    <property type="match status" value="1"/>
</dbReference>
<dbReference type="SUPFAM" id="SSF53383">
    <property type="entry name" value="PLP-dependent transferases"/>
    <property type="match status" value="1"/>
</dbReference>
<dbReference type="PROSITE" id="PS00096">
    <property type="entry name" value="SHMT"/>
    <property type="match status" value="1"/>
</dbReference>
<proteinExistence type="inferred from homology"/>
<comment type="function">
    <text evidence="1">Catalyzes the reversible interconversion of serine and glycine with tetrahydrofolate (THF) serving as the one-carbon carrier. This reaction serves as the major source of one-carbon groups required for the biosynthesis of purines, thymidylate, methionine, and other important biomolecules. Also exhibits THF-independent aldolase activity toward beta-hydroxyamino acids, producing glycine and aldehydes, via a retro-aldol mechanism.</text>
</comment>
<comment type="catalytic activity">
    <reaction evidence="1">
        <text>(6R)-5,10-methylene-5,6,7,8-tetrahydrofolate + glycine + H2O = (6S)-5,6,7,8-tetrahydrofolate + L-serine</text>
        <dbReference type="Rhea" id="RHEA:15481"/>
        <dbReference type="ChEBI" id="CHEBI:15377"/>
        <dbReference type="ChEBI" id="CHEBI:15636"/>
        <dbReference type="ChEBI" id="CHEBI:33384"/>
        <dbReference type="ChEBI" id="CHEBI:57305"/>
        <dbReference type="ChEBI" id="CHEBI:57453"/>
        <dbReference type="EC" id="2.1.2.1"/>
    </reaction>
</comment>
<comment type="cofactor">
    <cofactor evidence="1">
        <name>pyridoxal 5'-phosphate</name>
        <dbReference type="ChEBI" id="CHEBI:597326"/>
    </cofactor>
</comment>
<comment type="pathway">
    <text evidence="1">One-carbon metabolism; tetrahydrofolate interconversion.</text>
</comment>
<comment type="pathway">
    <text evidence="1">Amino-acid biosynthesis; glycine biosynthesis; glycine from L-serine: step 1/1.</text>
</comment>
<comment type="subunit">
    <text evidence="1">Homodimer.</text>
</comment>
<comment type="subcellular location">
    <subcellularLocation>
        <location evidence="1">Cytoplasm</location>
    </subcellularLocation>
</comment>
<comment type="similarity">
    <text evidence="1">Belongs to the SHMT family.</text>
</comment>
<organism>
    <name type="scientific">Dehalococcoides mccartyi (strain ATCC BAA-2100 / JCM 16839 / KCTC 5957 / BAV1)</name>
    <dbReference type="NCBI Taxonomy" id="216389"/>
    <lineage>
        <taxon>Bacteria</taxon>
        <taxon>Bacillati</taxon>
        <taxon>Chloroflexota</taxon>
        <taxon>Dehalococcoidia</taxon>
        <taxon>Dehalococcoidales</taxon>
        <taxon>Dehalococcoidaceae</taxon>
        <taxon>Dehalococcoides</taxon>
    </lineage>
</organism>
<accession>A5FS31</accession>
<name>GLYA_DEHMB</name>
<sequence length="415" mass="45240">MSFLKTSDPAVYNAIMQETTRLKETIDLIASENYTSKAVLEAQGSVFTNKYAEGYPGKRYYAGCEYADAVEELAIDRAKTLFHAEHANVQPHSGAQANMAAYFAMVKPGDTIMGLTLSHGGHLTHGSKVNFTGKLYHVIEYGLNAETERIDYDNLEKLAMEHRPRMIVTGASAYPRILDFERFRAICDKVDAKLMVDIAHIAGLVAAGLHPSPVPYADVVTSTSHKTLRGPRGGFILCKEQYAKAIDQAVFPVMQGGPLMQVVAAKAVAFQEAMQPGFVTYQKKTLENTQVMAEELRKLGLRLVSGGTDNHLVLVDLSPIGVNGYDAQLALRRAGIVINRNTVPFAENQTANVPAGIRLGCPAATSRGFGPAEIRQTVGWIGKILKNIGNEDVEKQVLAEVIHLCRKFPVPGIDI</sequence>
<reference key="1">
    <citation type="submission" date="2007-05" db="EMBL/GenBank/DDBJ databases">
        <title>Complete sequence of Dehalococcoides sp. BAV1.</title>
        <authorList>
            <consortium name="US DOE Joint Genome Institute"/>
            <person name="Copeland A."/>
            <person name="Lucas S."/>
            <person name="Lapidus A."/>
            <person name="Barry K."/>
            <person name="Detter J.C."/>
            <person name="Glavina del Rio T."/>
            <person name="Hammon N."/>
            <person name="Israni S."/>
            <person name="Pitluck S."/>
            <person name="Lowry S."/>
            <person name="Clum A."/>
            <person name="Schmutz J."/>
            <person name="Larimer F."/>
            <person name="Land M."/>
            <person name="Hauser L."/>
            <person name="Kyrpides N."/>
            <person name="Kim E."/>
            <person name="Ritalahti K.M."/>
            <person name="Loeffler F."/>
            <person name="Richardson P."/>
        </authorList>
    </citation>
    <scope>NUCLEOTIDE SEQUENCE [LARGE SCALE GENOMIC DNA]</scope>
    <source>
        <strain>ATCC BAA-2100 / JCM 16839 / KCTC 5957 / BAV1</strain>
    </source>
</reference>
<evidence type="ECO:0000255" key="1">
    <source>
        <dbReference type="HAMAP-Rule" id="MF_00051"/>
    </source>
</evidence>
<protein>
    <recommendedName>
        <fullName evidence="1">Serine hydroxymethyltransferase</fullName>
        <shortName evidence="1">SHMT</shortName>
        <shortName evidence="1">Serine methylase</shortName>
        <ecNumber evidence="1">2.1.2.1</ecNumber>
    </recommendedName>
</protein>
<gene>
    <name evidence="1" type="primary">glyA</name>
    <name type="ordered locus">DehaBAV1_0413</name>
</gene>